<gene>
    <name evidence="1" type="primary">dapA</name>
    <name type="ordered locus">Desal_1588</name>
</gene>
<dbReference type="EC" id="4.3.3.7" evidence="1"/>
<dbReference type="EMBL" id="CP001649">
    <property type="protein sequence ID" value="ACS79650.1"/>
    <property type="molecule type" value="Genomic_DNA"/>
</dbReference>
<dbReference type="RefSeq" id="WP_015851468.1">
    <property type="nucleotide sequence ID" value="NC_012881.1"/>
</dbReference>
<dbReference type="SMR" id="C6BSH4"/>
<dbReference type="STRING" id="526222.Desal_1588"/>
<dbReference type="KEGG" id="dsa:Desal_1588"/>
<dbReference type="eggNOG" id="COG0329">
    <property type="taxonomic scope" value="Bacteria"/>
</dbReference>
<dbReference type="HOGENOM" id="CLU_049343_7_1_7"/>
<dbReference type="OrthoDB" id="9782828at2"/>
<dbReference type="UniPathway" id="UPA00034">
    <property type="reaction ID" value="UER00017"/>
</dbReference>
<dbReference type="Proteomes" id="UP000002601">
    <property type="component" value="Chromosome"/>
</dbReference>
<dbReference type="GO" id="GO:0005829">
    <property type="term" value="C:cytosol"/>
    <property type="evidence" value="ECO:0007669"/>
    <property type="project" value="TreeGrafter"/>
</dbReference>
<dbReference type="GO" id="GO:0008840">
    <property type="term" value="F:4-hydroxy-tetrahydrodipicolinate synthase activity"/>
    <property type="evidence" value="ECO:0007669"/>
    <property type="project" value="UniProtKB-UniRule"/>
</dbReference>
<dbReference type="GO" id="GO:0019877">
    <property type="term" value="P:diaminopimelate biosynthetic process"/>
    <property type="evidence" value="ECO:0007669"/>
    <property type="project" value="UniProtKB-UniRule"/>
</dbReference>
<dbReference type="GO" id="GO:0009089">
    <property type="term" value="P:lysine biosynthetic process via diaminopimelate"/>
    <property type="evidence" value="ECO:0007669"/>
    <property type="project" value="UniProtKB-UniRule"/>
</dbReference>
<dbReference type="CDD" id="cd00950">
    <property type="entry name" value="DHDPS"/>
    <property type="match status" value="1"/>
</dbReference>
<dbReference type="Gene3D" id="3.20.20.70">
    <property type="entry name" value="Aldolase class I"/>
    <property type="match status" value="1"/>
</dbReference>
<dbReference type="HAMAP" id="MF_00418">
    <property type="entry name" value="DapA"/>
    <property type="match status" value="1"/>
</dbReference>
<dbReference type="InterPro" id="IPR013785">
    <property type="entry name" value="Aldolase_TIM"/>
</dbReference>
<dbReference type="InterPro" id="IPR005263">
    <property type="entry name" value="DapA"/>
</dbReference>
<dbReference type="InterPro" id="IPR002220">
    <property type="entry name" value="DapA-like"/>
</dbReference>
<dbReference type="InterPro" id="IPR020624">
    <property type="entry name" value="Schiff_base-form_aldolases_CS"/>
</dbReference>
<dbReference type="NCBIfam" id="TIGR00674">
    <property type="entry name" value="dapA"/>
    <property type="match status" value="1"/>
</dbReference>
<dbReference type="PANTHER" id="PTHR12128:SF66">
    <property type="entry name" value="4-HYDROXY-2-OXOGLUTARATE ALDOLASE, MITOCHONDRIAL"/>
    <property type="match status" value="1"/>
</dbReference>
<dbReference type="PANTHER" id="PTHR12128">
    <property type="entry name" value="DIHYDRODIPICOLINATE SYNTHASE"/>
    <property type="match status" value="1"/>
</dbReference>
<dbReference type="Pfam" id="PF00701">
    <property type="entry name" value="DHDPS"/>
    <property type="match status" value="1"/>
</dbReference>
<dbReference type="PIRSF" id="PIRSF001365">
    <property type="entry name" value="DHDPS"/>
    <property type="match status" value="1"/>
</dbReference>
<dbReference type="PRINTS" id="PR00146">
    <property type="entry name" value="DHPICSNTHASE"/>
</dbReference>
<dbReference type="SMART" id="SM01130">
    <property type="entry name" value="DHDPS"/>
    <property type="match status" value="1"/>
</dbReference>
<dbReference type="SUPFAM" id="SSF51569">
    <property type="entry name" value="Aldolase"/>
    <property type="match status" value="1"/>
</dbReference>
<dbReference type="PROSITE" id="PS00665">
    <property type="entry name" value="DHDPS_1"/>
    <property type="match status" value="1"/>
</dbReference>
<name>DAPA_MARSD</name>
<accession>C6BSH4</accession>
<reference key="1">
    <citation type="submission" date="2009-06" db="EMBL/GenBank/DDBJ databases">
        <title>Complete sequence of Desulfovibrio salexigens DSM 2638.</title>
        <authorList>
            <consortium name="US DOE Joint Genome Institute"/>
            <person name="Lucas S."/>
            <person name="Copeland A."/>
            <person name="Lapidus A."/>
            <person name="Glavina del Rio T."/>
            <person name="Tice H."/>
            <person name="Bruce D."/>
            <person name="Goodwin L."/>
            <person name="Pitluck S."/>
            <person name="Munk A.C."/>
            <person name="Brettin T."/>
            <person name="Detter J.C."/>
            <person name="Han C."/>
            <person name="Tapia R."/>
            <person name="Larimer F."/>
            <person name="Land M."/>
            <person name="Hauser L."/>
            <person name="Kyrpides N."/>
            <person name="Anderson I."/>
            <person name="Wall J.D."/>
            <person name="Arkin A.P."/>
            <person name="Dehal P."/>
            <person name="Chivian D."/>
            <person name="Giles B."/>
            <person name="Hazen T.C."/>
        </authorList>
    </citation>
    <scope>NUCLEOTIDE SEQUENCE [LARGE SCALE GENOMIC DNA]</scope>
    <source>
        <strain>ATCC 14822 / DSM 2638 / NCIMB 8403 / VKM B-1763</strain>
    </source>
</reference>
<evidence type="ECO:0000255" key="1">
    <source>
        <dbReference type="HAMAP-Rule" id="MF_00418"/>
    </source>
</evidence>
<evidence type="ECO:0000305" key="2"/>
<keyword id="KW-0028">Amino-acid biosynthesis</keyword>
<keyword id="KW-0963">Cytoplasm</keyword>
<keyword id="KW-0220">Diaminopimelate biosynthesis</keyword>
<keyword id="KW-0456">Lyase</keyword>
<keyword id="KW-0457">Lysine biosynthesis</keyword>
<keyword id="KW-1185">Reference proteome</keyword>
<keyword id="KW-0704">Schiff base</keyword>
<comment type="function">
    <text evidence="1">Catalyzes the condensation of (S)-aspartate-beta-semialdehyde [(S)-ASA] and pyruvate to 4-hydroxy-tetrahydrodipicolinate (HTPA).</text>
</comment>
<comment type="catalytic activity">
    <reaction evidence="1">
        <text>L-aspartate 4-semialdehyde + pyruvate = (2S,4S)-4-hydroxy-2,3,4,5-tetrahydrodipicolinate + H2O + H(+)</text>
        <dbReference type="Rhea" id="RHEA:34171"/>
        <dbReference type="ChEBI" id="CHEBI:15361"/>
        <dbReference type="ChEBI" id="CHEBI:15377"/>
        <dbReference type="ChEBI" id="CHEBI:15378"/>
        <dbReference type="ChEBI" id="CHEBI:67139"/>
        <dbReference type="ChEBI" id="CHEBI:537519"/>
        <dbReference type="EC" id="4.3.3.7"/>
    </reaction>
</comment>
<comment type="pathway">
    <text evidence="1">Amino-acid biosynthesis; L-lysine biosynthesis via DAP pathway; (S)-tetrahydrodipicolinate from L-aspartate: step 3/4.</text>
</comment>
<comment type="subunit">
    <text evidence="1">Homotetramer; dimer of dimers.</text>
</comment>
<comment type="subcellular location">
    <subcellularLocation>
        <location evidence="1">Cytoplasm</location>
    </subcellularLocation>
</comment>
<comment type="similarity">
    <text evidence="1">Belongs to the DapA family.</text>
</comment>
<comment type="caution">
    <text evidence="2">Was originally thought to be a dihydrodipicolinate synthase (DHDPS), catalyzing the condensation of (S)-aspartate-beta-semialdehyde [(S)-ASA] and pyruvate to dihydrodipicolinate (DHDP). However, it was shown in E.coli that the product of the enzymatic reaction is not dihydrodipicolinate but in fact (4S)-4-hydroxy-2,3,4,5-tetrahydro-(2S)-dipicolinic acid (HTPA), and that the consecutive dehydration reaction leading to DHDP is not spontaneous but catalyzed by DapB.</text>
</comment>
<proteinExistence type="inferred from homology"/>
<protein>
    <recommendedName>
        <fullName evidence="1">4-hydroxy-tetrahydrodipicolinate synthase</fullName>
        <shortName evidence="1">HTPA synthase</shortName>
        <ecNumber evidence="1">4.3.3.7</ecNumber>
    </recommendedName>
</protein>
<organism>
    <name type="scientific">Maridesulfovibrio salexigens (strain ATCC 14822 / DSM 2638 / NCIMB 8403 / VKM B-1763)</name>
    <name type="common">Desulfovibrio salexigens</name>
    <dbReference type="NCBI Taxonomy" id="526222"/>
    <lineage>
        <taxon>Bacteria</taxon>
        <taxon>Pseudomonadati</taxon>
        <taxon>Thermodesulfobacteriota</taxon>
        <taxon>Desulfovibrionia</taxon>
        <taxon>Desulfovibrionales</taxon>
        <taxon>Desulfovibrionaceae</taxon>
        <taxon>Maridesulfovibrio</taxon>
    </lineage>
</organism>
<sequence length="292" mass="31190">MTFQGAFTALVTPFKDGEIDQDAYRELIEWQIEQGIDGLVPCGTTGEAATMTHEEQGEVIRICVEQAKGRVPVIAGAGSNNTKEAVNLTKLAKQAGADATLQITPYYNKPTPAGLLAHFKALSEEASMPFILYNVPGRTGLNALPETIAMIANEVPDVVGVKEATANLGQVSDVIEQCPEGFTVLSGDDFTVLPLLALGGHGVISVVSNIVPDLMSGMCAAYRAGDMKKAQELHFKMQPLNRVMFVETNPIPVKTALGMMGKFETSFRLPLVPLMEASKAKLEAQLKASGLI</sequence>
<feature type="chain" id="PRO_1000206029" description="4-hydroxy-tetrahydrodipicolinate synthase">
    <location>
        <begin position="1"/>
        <end position="292"/>
    </location>
</feature>
<feature type="active site" description="Proton donor/acceptor" evidence="1">
    <location>
        <position position="133"/>
    </location>
</feature>
<feature type="active site" description="Schiff-base intermediate with substrate" evidence="1">
    <location>
        <position position="162"/>
    </location>
</feature>
<feature type="binding site" evidence="1">
    <location>
        <position position="45"/>
    </location>
    <ligand>
        <name>pyruvate</name>
        <dbReference type="ChEBI" id="CHEBI:15361"/>
    </ligand>
</feature>
<feature type="binding site" evidence="1">
    <location>
        <position position="204"/>
    </location>
    <ligand>
        <name>pyruvate</name>
        <dbReference type="ChEBI" id="CHEBI:15361"/>
    </ligand>
</feature>
<feature type="site" description="Part of a proton relay during catalysis" evidence="1">
    <location>
        <position position="44"/>
    </location>
</feature>
<feature type="site" description="Part of a proton relay during catalysis" evidence="1">
    <location>
        <position position="107"/>
    </location>
</feature>